<dbReference type="EMBL" id="AC004261">
    <property type="protein sequence ID" value="AAD12011.1"/>
    <property type="status" value="ALT_SEQ"/>
    <property type="molecule type" value="Genomic_DNA"/>
</dbReference>
<dbReference type="EMBL" id="CP002685">
    <property type="protein sequence ID" value="AEC09912.1"/>
    <property type="molecule type" value="Genomic_DNA"/>
</dbReference>
<dbReference type="RefSeq" id="NP_001078034.1">
    <property type="nucleotide sequence ID" value="NM_001084565.2"/>
</dbReference>
<dbReference type="STRING" id="3702.A8MQN0"/>
<dbReference type="PaxDb" id="3702-AT2G41997.1"/>
<dbReference type="EnsemblPlants" id="AT2G41997.1">
    <property type="protein sequence ID" value="AT2G41997.1"/>
    <property type="gene ID" value="AT2G41997"/>
</dbReference>
<dbReference type="GeneID" id="5007949"/>
<dbReference type="Gramene" id="AT2G41997.1">
    <property type="protein sequence ID" value="AT2G41997.1"/>
    <property type="gene ID" value="AT2G41997"/>
</dbReference>
<dbReference type="KEGG" id="ath:AT2G41997"/>
<dbReference type="Araport" id="AT2G41997"/>
<dbReference type="TAIR" id="AT2G41997">
    <property type="gene designation" value="LCR51"/>
</dbReference>
<dbReference type="eggNOG" id="KOG0714">
    <property type="taxonomic scope" value="Eukaryota"/>
</dbReference>
<dbReference type="HOGENOM" id="CLU_183259_0_0_1"/>
<dbReference type="InParanoid" id="A8MQN0"/>
<dbReference type="OMA" id="CATDACC"/>
<dbReference type="OrthoDB" id="1084748at2759"/>
<dbReference type="PhylomeDB" id="A8MQN0"/>
<dbReference type="PRO" id="PR:A8MQN0"/>
<dbReference type="Proteomes" id="UP000006548">
    <property type="component" value="Chromosome 2"/>
</dbReference>
<dbReference type="ExpressionAtlas" id="A8MQN0">
    <property type="expression patterns" value="baseline"/>
</dbReference>
<dbReference type="GO" id="GO:0005576">
    <property type="term" value="C:extracellular region"/>
    <property type="evidence" value="ECO:0007669"/>
    <property type="project" value="UniProtKB-SubCell"/>
</dbReference>
<dbReference type="GO" id="GO:0050832">
    <property type="term" value="P:defense response to fungus"/>
    <property type="evidence" value="ECO:0007669"/>
    <property type="project" value="UniProtKB-KW"/>
</dbReference>
<dbReference type="GO" id="GO:0031640">
    <property type="term" value="P:killing of cells of another organism"/>
    <property type="evidence" value="ECO:0007669"/>
    <property type="project" value="UniProtKB-KW"/>
</dbReference>
<organism>
    <name type="scientific">Arabidopsis thaliana</name>
    <name type="common">Mouse-ear cress</name>
    <dbReference type="NCBI Taxonomy" id="3702"/>
    <lineage>
        <taxon>Eukaryota</taxon>
        <taxon>Viridiplantae</taxon>
        <taxon>Streptophyta</taxon>
        <taxon>Embryophyta</taxon>
        <taxon>Tracheophyta</taxon>
        <taxon>Spermatophyta</taxon>
        <taxon>Magnoliopsida</taxon>
        <taxon>eudicotyledons</taxon>
        <taxon>Gunneridae</taxon>
        <taxon>Pentapetalae</taxon>
        <taxon>rosids</taxon>
        <taxon>malvids</taxon>
        <taxon>Brassicales</taxon>
        <taxon>Brassicaceae</taxon>
        <taxon>Camelineae</taxon>
        <taxon>Arabidopsis</taxon>
    </lineage>
</organism>
<evidence type="ECO:0000250" key="1"/>
<evidence type="ECO:0000255" key="2"/>
<evidence type="ECO:0000305" key="3"/>
<feature type="signal peptide" evidence="2">
    <location>
        <begin position="1"/>
        <end position="20"/>
    </location>
</feature>
<feature type="chain" id="PRO_0000379671" description="Defensin-like protein 108">
    <location>
        <begin position="21"/>
        <end position="89"/>
    </location>
</feature>
<feature type="disulfide bond" evidence="1">
    <location>
        <begin position="39"/>
        <end position="81"/>
    </location>
</feature>
<feature type="disulfide bond" evidence="1">
    <location>
        <begin position="49"/>
        <end position="71"/>
    </location>
</feature>
<feature type="disulfide bond" evidence="1">
    <location>
        <begin position="57"/>
        <end position="79"/>
    </location>
</feature>
<feature type="disulfide bond" evidence="1">
    <location>
        <begin position="61"/>
        <end position="80"/>
    </location>
</feature>
<comment type="subcellular location">
    <subcellularLocation>
        <location evidence="1">Secreted</location>
    </subcellularLocation>
</comment>
<comment type="similarity">
    <text evidence="3">Belongs to the DEFL family.</text>
</comment>
<comment type="sequence caution" evidence="3">
    <conflict type="erroneous gene model prediction">
        <sequence resource="EMBL-CDS" id="AAD12011"/>
    </conflict>
    <text>The predicted gene has been split into 2 genes: At2g41997 and At2g41000.</text>
</comment>
<keyword id="KW-0929">Antimicrobial</keyword>
<keyword id="KW-1015">Disulfide bond</keyword>
<keyword id="KW-0295">Fungicide</keyword>
<keyword id="KW-0611">Plant defense</keyword>
<keyword id="KW-1185">Reference proteome</keyword>
<keyword id="KW-0964">Secreted</keyword>
<keyword id="KW-0732">Signal</keyword>
<protein>
    <recommendedName>
        <fullName>Defensin-like protein 108</fullName>
    </recommendedName>
    <alternativeName>
        <fullName>Low-molecular-weight cysteine-rich protein 51</fullName>
        <shortName>Protein LCR51</shortName>
    </alternativeName>
</protein>
<sequence length="89" mass="9692">MTSLIAFLFTVLVIVSSVHCRMTTASTPGYGIKQEDRLCIQGQEGTKLCSSGTSRDCLNFCLIRGYAGGSCYAYTLDQCCCRIPPPKLK</sequence>
<reference key="1">
    <citation type="journal article" date="1999" name="Nature">
        <title>Sequence and analysis of chromosome 2 of the plant Arabidopsis thaliana.</title>
        <authorList>
            <person name="Lin X."/>
            <person name="Kaul S."/>
            <person name="Rounsley S.D."/>
            <person name="Shea T.P."/>
            <person name="Benito M.-I."/>
            <person name="Town C.D."/>
            <person name="Fujii C.Y."/>
            <person name="Mason T.M."/>
            <person name="Bowman C.L."/>
            <person name="Barnstead M.E."/>
            <person name="Feldblyum T.V."/>
            <person name="Buell C.R."/>
            <person name="Ketchum K.A."/>
            <person name="Lee J.J."/>
            <person name="Ronning C.M."/>
            <person name="Koo H.L."/>
            <person name="Moffat K.S."/>
            <person name="Cronin L.A."/>
            <person name="Shen M."/>
            <person name="Pai G."/>
            <person name="Van Aken S."/>
            <person name="Umayam L."/>
            <person name="Tallon L.J."/>
            <person name="Gill J.E."/>
            <person name="Adams M.D."/>
            <person name="Carrera A.J."/>
            <person name="Creasy T.H."/>
            <person name="Goodman H.M."/>
            <person name="Somerville C.R."/>
            <person name="Copenhaver G.P."/>
            <person name="Preuss D."/>
            <person name="Nierman W.C."/>
            <person name="White O."/>
            <person name="Eisen J.A."/>
            <person name="Salzberg S.L."/>
            <person name="Fraser C.M."/>
            <person name="Venter J.C."/>
        </authorList>
    </citation>
    <scope>NUCLEOTIDE SEQUENCE [LARGE SCALE GENOMIC DNA]</scope>
    <source>
        <strain>cv. Columbia</strain>
    </source>
</reference>
<reference key="2">
    <citation type="journal article" date="2017" name="Plant J.">
        <title>Araport11: a complete reannotation of the Arabidopsis thaliana reference genome.</title>
        <authorList>
            <person name="Cheng C.Y."/>
            <person name="Krishnakumar V."/>
            <person name="Chan A.P."/>
            <person name="Thibaud-Nissen F."/>
            <person name="Schobel S."/>
            <person name="Town C.D."/>
        </authorList>
    </citation>
    <scope>GENOME REANNOTATION</scope>
    <source>
        <strain>cv. Columbia</strain>
    </source>
</reference>
<reference key="3">
    <citation type="journal article" date="2001" name="Plant Mol. Biol.">
        <title>Two large Arabidopsis thaliana gene families are homologous to the Brassica gene superfamily that encodes pollen coat proteins and the male component of the self-incompatibility response.</title>
        <authorList>
            <person name="Vanoosthuyse V."/>
            <person name="Miege C."/>
            <person name="Dumas C."/>
            <person name="Cock J.M."/>
        </authorList>
    </citation>
    <scope>IDENTIFICATION</scope>
</reference>
<reference key="4">
    <citation type="journal article" date="2005" name="Plant Physiol.">
        <title>Genome organization of more than 300 defensin-like genes in Arabidopsis.</title>
        <authorList>
            <person name="Silverstein K.A.T."/>
            <person name="Graham M.A."/>
            <person name="Paape T.D."/>
            <person name="VandenBosch K.A."/>
        </authorList>
    </citation>
    <scope>GENE FAMILY</scope>
</reference>
<proteinExistence type="evidence at transcript level"/>
<gene>
    <name type="primary">LCR51</name>
    <name type="ordered locus">At2g41997</name>
    <name type="ORF">T3K9</name>
</gene>
<accession>A8MQN0</accession>
<accession>O80684</accession>
<name>DF108_ARATH</name>